<evidence type="ECO:0000255" key="1">
    <source>
        <dbReference type="HAMAP-Rule" id="MF_01200"/>
    </source>
</evidence>
<sequence>MKETRPIIALDFAGKEEVQSFLEQFPPDEKLYVKVGMELYYAEGPGIINYLKDCGHSIFLDLKLHDIPNTVESAMKVLAKLGVDMTNVHAAGGVEMMRAARRGLGKDAVLIAVTQLTSTSEEQMRTDQNIQTSLQEAVVHYAQRAQEAGLDGVVCSAHEVALIKDATSSDFVCLTPGIRPTGGEVGDQKRVMTPADAARIGSDYIVVGRPITKSEHPYQTYLSIKEEWNRG</sequence>
<accession>A4VV36</accession>
<feature type="chain" id="PRO_1000065953" description="Orotidine 5'-phosphate decarboxylase">
    <location>
        <begin position="1"/>
        <end position="231"/>
    </location>
</feature>
<feature type="active site" description="Proton donor" evidence="1">
    <location>
        <position position="63"/>
    </location>
</feature>
<feature type="binding site" evidence="1">
    <location>
        <position position="11"/>
    </location>
    <ligand>
        <name>substrate</name>
    </ligand>
</feature>
<feature type="binding site" evidence="1">
    <location>
        <position position="34"/>
    </location>
    <ligand>
        <name>substrate</name>
    </ligand>
</feature>
<feature type="binding site" evidence="1">
    <location>
        <begin position="61"/>
        <end position="70"/>
    </location>
    <ligand>
        <name>substrate</name>
    </ligand>
</feature>
<feature type="binding site" evidence="1">
    <location>
        <position position="117"/>
    </location>
    <ligand>
        <name>substrate</name>
    </ligand>
</feature>
<feature type="binding site" evidence="1">
    <location>
        <position position="179"/>
    </location>
    <ligand>
        <name>substrate</name>
    </ligand>
</feature>
<feature type="binding site" evidence="1">
    <location>
        <position position="188"/>
    </location>
    <ligand>
        <name>substrate</name>
    </ligand>
</feature>
<feature type="binding site" evidence="1">
    <location>
        <position position="208"/>
    </location>
    <ligand>
        <name>substrate</name>
    </ligand>
</feature>
<feature type="binding site" evidence="1">
    <location>
        <position position="209"/>
    </location>
    <ligand>
        <name>substrate</name>
    </ligand>
</feature>
<keyword id="KW-0210">Decarboxylase</keyword>
<keyword id="KW-0456">Lyase</keyword>
<keyword id="KW-0665">Pyrimidine biosynthesis</keyword>
<reference key="1">
    <citation type="journal article" date="2007" name="PLoS ONE">
        <title>A glimpse of streptococcal toxic shock syndrome from comparative genomics of S. suis 2 Chinese isolates.</title>
        <authorList>
            <person name="Chen C."/>
            <person name="Tang J."/>
            <person name="Dong W."/>
            <person name="Wang C."/>
            <person name="Feng Y."/>
            <person name="Wang J."/>
            <person name="Zheng F."/>
            <person name="Pan X."/>
            <person name="Liu D."/>
            <person name="Li M."/>
            <person name="Song Y."/>
            <person name="Zhu X."/>
            <person name="Sun H."/>
            <person name="Feng T."/>
            <person name="Guo Z."/>
            <person name="Ju A."/>
            <person name="Ge J."/>
            <person name="Dong Y."/>
            <person name="Sun W."/>
            <person name="Jiang Y."/>
            <person name="Wang J."/>
            <person name="Yan J."/>
            <person name="Yang H."/>
            <person name="Wang X."/>
            <person name="Gao G.F."/>
            <person name="Yang R."/>
            <person name="Wang J."/>
            <person name="Yu J."/>
        </authorList>
    </citation>
    <scope>NUCLEOTIDE SEQUENCE [LARGE SCALE GENOMIC DNA]</scope>
    <source>
        <strain>05ZYH33</strain>
    </source>
</reference>
<proteinExistence type="inferred from homology"/>
<protein>
    <recommendedName>
        <fullName evidence="1">Orotidine 5'-phosphate decarboxylase</fullName>
        <ecNumber evidence="1">4.1.1.23</ecNumber>
    </recommendedName>
    <alternativeName>
        <fullName evidence="1">OMP decarboxylase</fullName>
        <shortName evidence="1">OMPDCase</shortName>
        <shortName evidence="1">OMPdecase</shortName>
    </alternativeName>
</protein>
<organism>
    <name type="scientific">Streptococcus suis (strain 05ZYH33)</name>
    <dbReference type="NCBI Taxonomy" id="391295"/>
    <lineage>
        <taxon>Bacteria</taxon>
        <taxon>Bacillati</taxon>
        <taxon>Bacillota</taxon>
        <taxon>Bacilli</taxon>
        <taxon>Lactobacillales</taxon>
        <taxon>Streptococcaceae</taxon>
        <taxon>Streptococcus</taxon>
    </lineage>
</organism>
<dbReference type="EC" id="4.1.1.23" evidence="1"/>
<dbReference type="EMBL" id="CP000407">
    <property type="protein sequence ID" value="ABP89975.1"/>
    <property type="molecule type" value="Genomic_DNA"/>
</dbReference>
<dbReference type="SMR" id="A4VV36"/>
<dbReference type="STRING" id="391295.SSU05_1009"/>
<dbReference type="KEGG" id="ssu:SSU05_1009"/>
<dbReference type="eggNOG" id="COG0284">
    <property type="taxonomic scope" value="Bacteria"/>
</dbReference>
<dbReference type="HOGENOM" id="CLU_067069_1_1_9"/>
<dbReference type="UniPathway" id="UPA00070">
    <property type="reaction ID" value="UER00120"/>
</dbReference>
<dbReference type="GO" id="GO:0005829">
    <property type="term" value="C:cytosol"/>
    <property type="evidence" value="ECO:0007669"/>
    <property type="project" value="TreeGrafter"/>
</dbReference>
<dbReference type="GO" id="GO:0004590">
    <property type="term" value="F:orotidine-5'-phosphate decarboxylase activity"/>
    <property type="evidence" value="ECO:0007669"/>
    <property type="project" value="UniProtKB-UniRule"/>
</dbReference>
<dbReference type="GO" id="GO:0006207">
    <property type="term" value="P:'de novo' pyrimidine nucleobase biosynthetic process"/>
    <property type="evidence" value="ECO:0007669"/>
    <property type="project" value="InterPro"/>
</dbReference>
<dbReference type="GO" id="GO:0044205">
    <property type="term" value="P:'de novo' UMP biosynthetic process"/>
    <property type="evidence" value="ECO:0007669"/>
    <property type="project" value="UniProtKB-UniRule"/>
</dbReference>
<dbReference type="CDD" id="cd04725">
    <property type="entry name" value="OMP_decarboxylase_like"/>
    <property type="match status" value="1"/>
</dbReference>
<dbReference type="FunFam" id="3.20.20.70:FF:000015">
    <property type="entry name" value="Orotidine 5'-phosphate decarboxylase"/>
    <property type="match status" value="1"/>
</dbReference>
<dbReference type="Gene3D" id="3.20.20.70">
    <property type="entry name" value="Aldolase class I"/>
    <property type="match status" value="1"/>
</dbReference>
<dbReference type="HAMAP" id="MF_01200_B">
    <property type="entry name" value="OMPdecase_type1_B"/>
    <property type="match status" value="1"/>
</dbReference>
<dbReference type="InterPro" id="IPR013785">
    <property type="entry name" value="Aldolase_TIM"/>
</dbReference>
<dbReference type="InterPro" id="IPR014732">
    <property type="entry name" value="OMPdecase"/>
</dbReference>
<dbReference type="InterPro" id="IPR018089">
    <property type="entry name" value="OMPdecase_AS"/>
</dbReference>
<dbReference type="InterPro" id="IPR047596">
    <property type="entry name" value="OMPdecase_bac"/>
</dbReference>
<dbReference type="InterPro" id="IPR001754">
    <property type="entry name" value="OMPdeCOase_dom"/>
</dbReference>
<dbReference type="InterPro" id="IPR011060">
    <property type="entry name" value="RibuloseP-bd_barrel"/>
</dbReference>
<dbReference type="NCBIfam" id="NF001273">
    <property type="entry name" value="PRK00230.1"/>
    <property type="match status" value="1"/>
</dbReference>
<dbReference type="NCBIfam" id="TIGR01740">
    <property type="entry name" value="pyrF"/>
    <property type="match status" value="1"/>
</dbReference>
<dbReference type="PANTHER" id="PTHR32119">
    <property type="entry name" value="OROTIDINE 5'-PHOSPHATE DECARBOXYLASE"/>
    <property type="match status" value="1"/>
</dbReference>
<dbReference type="PANTHER" id="PTHR32119:SF2">
    <property type="entry name" value="OROTIDINE 5'-PHOSPHATE DECARBOXYLASE"/>
    <property type="match status" value="1"/>
</dbReference>
<dbReference type="Pfam" id="PF00215">
    <property type="entry name" value="OMPdecase"/>
    <property type="match status" value="1"/>
</dbReference>
<dbReference type="SMART" id="SM00934">
    <property type="entry name" value="OMPdecase"/>
    <property type="match status" value="1"/>
</dbReference>
<dbReference type="SUPFAM" id="SSF51366">
    <property type="entry name" value="Ribulose-phoshate binding barrel"/>
    <property type="match status" value="1"/>
</dbReference>
<dbReference type="PROSITE" id="PS00156">
    <property type="entry name" value="OMPDECASE"/>
    <property type="match status" value="1"/>
</dbReference>
<gene>
    <name evidence="1" type="primary">pyrF</name>
    <name type="ordered locus">SSU05_1009</name>
</gene>
<comment type="function">
    <text evidence="1">Catalyzes the decarboxylation of orotidine 5'-monophosphate (OMP) to uridine 5'-monophosphate (UMP).</text>
</comment>
<comment type="catalytic activity">
    <reaction evidence="1">
        <text>orotidine 5'-phosphate + H(+) = UMP + CO2</text>
        <dbReference type="Rhea" id="RHEA:11596"/>
        <dbReference type="ChEBI" id="CHEBI:15378"/>
        <dbReference type="ChEBI" id="CHEBI:16526"/>
        <dbReference type="ChEBI" id="CHEBI:57538"/>
        <dbReference type="ChEBI" id="CHEBI:57865"/>
        <dbReference type="EC" id="4.1.1.23"/>
    </reaction>
</comment>
<comment type="pathway">
    <text evidence="1">Pyrimidine metabolism; UMP biosynthesis via de novo pathway; UMP from orotate: step 2/2.</text>
</comment>
<comment type="subunit">
    <text evidence="1">Homodimer.</text>
</comment>
<comment type="similarity">
    <text evidence="1">Belongs to the OMP decarboxylase family. Type 1 subfamily.</text>
</comment>
<name>PYRF_STRSY</name>